<evidence type="ECO:0000250" key="1"/>
<evidence type="ECO:0000255" key="2"/>
<evidence type="ECO:0000255" key="3">
    <source>
        <dbReference type="PROSITE-ProRule" id="PRU00102"/>
    </source>
</evidence>
<evidence type="ECO:0000255" key="4">
    <source>
        <dbReference type="PROSITE-ProRule" id="PRU00107"/>
    </source>
</evidence>
<name>HSSS_STAAS</name>
<sequence length="457" mass="52348">MFKTLYARIAIYSITVILFSALISFVLTNVYYHYNLKASNDAKIMKTLKEARQYEQSAKPTHIQQYFKHLGQMNYQIMTVDQKGHKTFYGEPFREDTLSQNAINNVLNNKDYHGIKDKPFALFVTGFFDNVTDNTVGINFKTKDGSIAVFMRPDIGETFSEFRTFLAVLLMLLLFISISLVIASTYSIIRPVKKLKLATERLIDGDFETPIKQTRKDEIGTLQYHFNKMRESLGQVDQMRQHFVQNVSHEIKTPLTHIHHLLSELQQTSDNTLRQQYINDIYTITTQLSGLTTELLLLSELDNHQHLLFDDKIQVDQLIKDIIRHEQFAADEKSLIILADLESINFLGNQRLLHQALSNLLINAIKYTDVGGAIDIALQHSHNNIIFTISNDGSPISPQAEARLFERFYKVSKHDNSNGLGLAITKSIIELHHGTIQFTQSNEYVTTFTITLPNNSL</sequence>
<reference key="1">
    <citation type="journal article" date="2004" name="Proc. Natl. Acad. Sci. U.S.A.">
        <title>Complete genomes of two clinical Staphylococcus aureus strains: evidence for the rapid evolution of virulence and drug resistance.</title>
        <authorList>
            <person name="Holden M.T.G."/>
            <person name="Feil E.J."/>
            <person name="Lindsay J.A."/>
            <person name="Peacock S.J."/>
            <person name="Day N.P.J."/>
            <person name="Enright M.C."/>
            <person name="Foster T.J."/>
            <person name="Moore C.E."/>
            <person name="Hurst L."/>
            <person name="Atkin R."/>
            <person name="Barron A."/>
            <person name="Bason N."/>
            <person name="Bentley S.D."/>
            <person name="Chillingworth C."/>
            <person name="Chillingworth T."/>
            <person name="Churcher C."/>
            <person name="Clark L."/>
            <person name="Corton C."/>
            <person name="Cronin A."/>
            <person name="Doggett J."/>
            <person name="Dowd L."/>
            <person name="Feltwell T."/>
            <person name="Hance Z."/>
            <person name="Harris B."/>
            <person name="Hauser H."/>
            <person name="Holroyd S."/>
            <person name="Jagels K."/>
            <person name="James K.D."/>
            <person name="Lennard N."/>
            <person name="Line A."/>
            <person name="Mayes R."/>
            <person name="Moule S."/>
            <person name="Mungall K."/>
            <person name="Ormond D."/>
            <person name="Quail M.A."/>
            <person name="Rabbinowitsch E."/>
            <person name="Rutherford K.M."/>
            <person name="Sanders M."/>
            <person name="Sharp S."/>
            <person name="Simmonds M."/>
            <person name="Stevens K."/>
            <person name="Whitehead S."/>
            <person name="Barrell B.G."/>
            <person name="Spratt B.G."/>
            <person name="Parkhill J."/>
        </authorList>
    </citation>
    <scope>NUCLEOTIDE SEQUENCE [LARGE SCALE GENOMIC DNA]</scope>
    <source>
        <strain>MSSA476</strain>
    </source>
</reference>
<organism>
    <name type="scientific">Staphylococcus aureus (strain MSSA476)</name>
    <dbReference type="NCBI Taxonomy" id="282459"/>
    <lineage>
        <taxon>Bacteria</taxon>
        <taxon>Bacillati</taxon>
        <taxon>Bacillota</taxon>
        <taxon>Bacilli</taxon>
        <taxon>Bacillales</taxon>
        <taxon>Staphylococcaceae</taxon>
        <taxon>Staphylococcus</taxon>
    </lineage>
</organism>
<protein>
    <recommendedName>
        <fullName>Heme sensor protein HssS</fullName>
        <ecNumber>2.7.13.3</ecNumber>
    </recommendedName>
</protein>
<comment type="function">
    <text evidence="1">Member of the two-component regulatory system HssS/HssR involved in intracellular heme homeostasis and tempering of staphylococcal virulence. HssS functions as a heme sensor histidine kinase which is autophosphorylated at a histidine residue and transfers its phosphate group to an aspartate residue of HssR. HssR/HssS activates the expression of hrtAB, an efflux pump, in response to extracellular heme, hemin, hemoglobin or blood (By similarity).</text>
</comment>
<comment type="catalytic activity">
    <reaction>
        <text>ATP + protein L-histidine = ADP + protein N-phospho-L-histidine.</text>
        <dbReference type="EC" id="2.7.13.3"/>
    </reaction>
</comment>
<comment type="subcellular location">
    <subcellularLocation>
        <location evidence="1">Cell membrane</location>
        <topology evidence="1">Multi-pass membrane protein</topology>
    </subcellularLocation>
</comment>
<comment type="PTM">
    <text evidence="1">Autophosphorylated.</text>
</comment>
<dbReference type="EC" id="2.7.13.3"/>
<dbReference type="EMBL" id="BX571857">
    <property type="protein sequence ID" value="CAG44066.1"/>
    <property type="molecule type" value="Genomic_DNA"/>
</dbReference>
<dbReference type="RefSeq" id="WP_000477339.1">
    <property type="nucleotide sequence ID" value="NC_002953.3"/>
</dbReference>
<dbReference type="SMR" id="Q6G6V8"/>
<dbReference type="KEGG" id="sas:SAS2253"/>
<dbReference type="HOGENOM" id="CLU_000445_89_6_9"/>
<dbReference type="GO" id="GO:0005886">
    <property type="term" value="C:plasma membrane"/>
    <property type="evidence" value="ECO:0007669"/>
    <property type="project" value="UniProtKB-SubCell"/>
</dbReference>
<dbReference type="GO" id="GO:0005524">
    <property type="term" value="F:ATP binding"/>
    <property type="evidence" value="ECO:0007669"/>
    <property type="project" value="UniProtKB-KW"/>
</dbReference>
<dbReference type="GO" id="GO:0000155">
    <property type="term" value="F:phosphorelay sensor kinase activity"/>
    <property type="evidence" value="ECO:0007669"/>
    <property type="project" value="InterPro"/>
</dbReference>
<dbReference type="CDD" id="cd06225">
    <property type="entry name" value="HAMP"/>
    <property type="match status" value="1"/>
</dbReference>
<dbReference type="CDD" id="cd00082">
    <property type="entry name" value="HisKA"/>
    <property type="match status" value="1"/>
</dbReference>
<dbReference type="FunFam" id="3.30.565.10:FF:000090">
    <property type="entry name" value="Heme sensor histidine kinase HssS"/>
    <property type="match status" value="1"/>
</dbReference>
<dbReference type="Gene3D" id="1.10.287.130">
    <property type="match status" value="1"/>
</dbReference>
<dbReference type="Gene3D" id="6.10.340.10">
    <property type="match status" value="1"/>
</dbReference>
<dbReference type="Gene3D" id="3.30.565.10">
    <property type="entry name" value="Histidine kinase-like ATPase, C-terminal domain"/>
    <property type="match status" value="1"/>
</dbReference>
<dbReference type="InterPro" id="IPR050398">
    <property type="entry name" value="Bact_Sensor_His_Kinase"/>
</dbReference>
<dbReference type="InterPro" id="IPR003660">
    <property type="entry name" value="HAMP_dom"/>
</dbReference>
<dbReference type="InterPro" id="IPR036890">
    <property type="entry name" value="HATPase_C_sf"/>
</dbReference>
<dbReference type="InterPro" id="IPR005467">
    <property type="entry name" value="His_kinase_dom"/>
</dbReference>
<dbReference type="InterPro" id="IPR003661">
    <property type="entry name" value="HisK_dim/P_dom"/>
</dbReference>
<dbReference type="InterPro" id="IPR036097">
    <property type="entry name" value="HisK_dim/P_sf"/>
</dbReference>
<dbReference type="InterPro" id="IPR004358">
    <property type="entry name" value="Sig_transdc_His_kin-like_C"/>
</dbReference>
<dbReference type="PANTHER" id="PTHR45528:SF11">
    <property type="entry name" value="HISTIDINE KINASE"/>
    <property type="match status" value="1"/>
</dbReference>
<dbReference type="PANTHER" id="PTHR45528">
    <property type="entry name" value="SENSOR HISTIDINE KINASE CPXA"/>
    <property type="match status" value="1"/>
</dbReference>
<dbReference type="Pfam" id="PF00672">
    <property type="entry name" value="HAMP"/>
    <property type="match status" value="1"/>
</dbReference>
<dbReference type="Pfam" id="PF02518">
    <property type="entry name" value="HATPase_c"/>
    <property type="match status" value="1"/>
</dbReference>
<dbReference type="Pfam" id="PF00512">
    <property type="entry name" value="HisKA"/>
    <property type="match status" value="1"/>
</dbReference>
<dbReference type="PRINTS" id="PR00344">
    <property type="entry name" value="BCTRLSENSOR"/>
</dbReference>
<dbReference type="SMART" id="SM00304">
    <property type="entry name" value="HAMP"/>
    <property type="match status" value="1"/>
</dbReference>
<dbReference type="SMART" id="SM00387">
    <property type="entry name" value="HATPase_c"/>
    <property type="match status" value="1"/>
</dbReference>
<dbReference type="SMART" id="SM00388">
    <property type="entry name" value="HisKA"/>
    <property type="match status" value="1"/>
</dbReference>
<dbReference type="SUPFAM" id="SSF55874">
    <property type="entry name" value="ATPase domain of HSP90 chaperone/DNA topoisomerase II/histidine kinase"/>
    <property type="match status" value="1"/>
</dbReference>
<dbReference type="SUPFAM" id="SSF158472">
    <property type="entry name" value="HAMP domain-like"/>
    <property type="match status" value="1"/>
</dbReference>
<dbReference type="SUPFAM" id="SSF47384">
    <property type="entry name" value="Homodimeric domain of signal transducing histidine kinase"/>
    <property type="match status" value="1"/>
</dbReference>
<dbReference type="PROSITE" id="PS50885">
    <property type="entry name" value="HAMP"/>
    <property type="match status" value="1"/>
</dbReference>
<dbReference type="PROSITE" id="PS50109">
    <property type="entry name" value="HIS_KIN"/>
    <property type="match status" value="1"/>
</dbReference>
<feature type="chain" id="PRO_0000331342" description="Heme sensor protein HssS">
    <location>
        <begin position="1"/>
        <end position="457"/>
    </location>
</feature>
<feature type="transmembrane region" description="Helical" evidence="2">
    <location>
        <begin position="9"/>
        <end position="29"/>
    </location>
</feature>
<feature type="transmembrane region" description="Helical" evidence="2">
    <location>
        <begin position="164"/>
        <end position="184"/>
    </location>
</feature>
<feature type="domain" description="HAMP" evidence="3">
    <location>
        <begin position="186"/>
        <end position="238"/>
    </location>
</feature>
<feature type="domain" description="Histidine kinase" evidence="4">
    <location>
        <begin position="246"/>
        <end position="456"/>
    </location>
</feature>
<feature type="modified residue" description="Phosphohistidine; by autocatalysis" evidence="4">
    <location>
        <position position="249"/>
    </location>
</feature>
<accession>Q6G6V8</accession>
<proteinExistence type="inferred from homology"/>
<gene>
    <name type="primary">hssS</name>
    <name type="ordered locus">SAS2253</name>
</gene>
<keyword id="KW-0067">ATP-binding</keyword>
<keyword id="KW-1003">Cell membrane</keyword>
<keyword id="KW-0418">Kinase</keyword>
<keyword id="KW-0472">Membrane</keyword>
<keyword id="KW-0547">Nucleotide-binding</keyword>
<keyword id="KW-0597">Phosphoprotein</keyword>
<keyword id="KW-0808">Transferase</keyword>
<keyword id="KW-0812">Transmembrane</keyword>
<keyword id="KW-1133">Transmembrane helix</keyword>
<keyword id="KW-0902">Two-component regulatory system</keyword>
<keyword id="KW-0843">Virulence</keyword>